<feature type="chain" id="PRO_0000446270" description="Short-chain dehydrogenase RED3">
    <location>
        <begin position="1"/>
        <end position="250"/>
    </location>
</feature>
<feature type="active site" description="Proton donor" evidence="2">
    <location>
        <position position="145"/>
    </location>
</feature>
<feature type="active site" description="Proton donor" evidence="2">
    <location>
        <position position="164"/>
    </location>
</feature>
<feature type="active site" description="Lowers pKa of active site Tyr" evidence="2">
    <location>
        <position position="168"/>
    </location>
</feature>
<feature type="binding site" evidence="1">
    <location>
        <position position="16"/>
    </location>
    <ligand>
        <name>NADP(+)</name>
        <dbReference type="ChEBI" id="CHEBI:58349"/>
    </ligand>
</feature>
<feature type="binding site" evidence="1">
    <location>
        <position position="35"/>
    </location>
    <ligand>
        <name>NADP(+)</name>
        <dbReference type="ChEBI" id="CHEBI:58349"/>
    </ligand>
</feature>
<feature type="binding site" evidence="1">
    <location>
        <position position="63"/>
    </location>
    <ligand>
        <name>NADP(+)</name>
        <dbReference type="ChEBI" id="CHEBI:58349"/>
    </ligand>
</feature>
<feature type="binding site" evidence="2">
    <location>
        <position position="91"/>
    </location>
    <ligand>
        <name>NADP(+)</name>
        <dbReference type="ChEBI" id="CHEBI:58349"/>
    </ligand>
</feature>
<feature type="binding site" evidence="2">
    <location>
        <position position="164"/>
    </location>
    <ligand>
        <name>NADP(+)</name>
        <dbReference type="ChEBI" id="CHEBI:58349"/>
    </ligand>
</feature>
<feature type="binding site" evidence="2">
    <location>
        <position position="168"/>
    </location>
    <ligand>
        <name>NADP(+)</name>
        <dbReference type="ChEBI" id="CHEBI:58349"/>
    </ligand>
</feature>
<feature type="binding site" evidence="2">
    <location>
        <position position="195"/>
    </location>
    <ligand>
        <name>NADP(+)</name>
        <dbReference type="ChEBI" id="CHEBI:58349"/>
    </ligand>
</feature>
<feature type="binding site" evidence="1">
    <location>
        <position position="197"/>
    </location>
    <ligand>
        <name>NADP(+)</name>
        <dbReference type="ChEBI" id="CHEBI:58349"/>
    </ligand>
</feature>
<gene>
    <name evidence="4" type="primary">RED3</name>
    <name type="ORF">MGG_10910</name>
</gene>
<name>RED3_PYRO7</name>
<sequence length="250" mass="26296">MSKSTTVLITGANKGIGLGMAKAYLSRPNHIVICSVRSAKTDVTDLEAASKASGSKLLLVYIESTSKTDPAKAVEDVQAAGVDHLDVLIANAGGMPEGNKPLLELGPDELCWSVQVNAAAPLLVLQAFKPLLQKADAPRFAVISSTSGSIEHMKNIHSFIFPGYGAAKATLNWLTMGVHLSQEWLTTLVIHPGLVQSEPGNWVAKQIGMAEAPTTIEQAAEGVIKALTNATRESVGGKFLSTSDGTVLPW</sequence>
<organism>
    <name type="scientific">Pyricularia oryzae (strain 70-15 / ATCC MYA-4617 / FGSC 8958)</name>
    <name type="common">Rice blast fungus</name>
    <name type="synonym">Magnaporthe oryzae</name>
    <dbReference type="NCBI Taxonomy" id="242507"/>
    <lineage>
        <taxon>Eukaryota</taxon>
        <taxon>Fungi</taxon>
        <taxon>Dikarya</taxon>
        <taxon>Ascomycota</taxon>
        <taxon>Pezizomycotina</taxon>
        <taxon>Sordariomycetes</taxon>
        <taxon>Sordariomycetidae</taxon>
        <taxon>Magnaporthales</taxon>
        <taxon>Pyriculariaceae</taxon>
        <taxon>Pyricularia</taxon>
    </lineage>
</organism>
<keyword id="KW-0521">NADP</keyword>
<keyword id="KW-0560">Oxidoreductase</keyword>
<keyword id="KW-1185">Reference proteome</keyword>
<evidence type="ECO:0000250" key="1">
    <source>
        <dbReference type="UniProtKB" id="L0E2Z4"/>
    </source>
</evidence>
<evidence type="ECO:0000250" key="2">
    <source>
        <dbReference type="UniProtKB" id="O93868"/>
    </source>
</evidence>
<evidence type="ECO:0000269" key="3">
    <source>
    </source>
</evidence>
<evidence type="ECO:0000303" key="4">
    <source>
    </source>
</evidence>
<evidence type="ECO:0000305" key="5"/>
<evidence type="ECO:0000305" key="6">
    <source>
    </source>
</evidence>
<reference key="1">
    <citation type="journal article" date="2005" name="Nature">
        <title>The genome sequence of the rice blast fungus Magnaporthe grisea.</title>
        <authorList>
            <person name="Dean R.A."/>
            <person name="Talbot N.J."/>
            <person name="Ebbole D.J."/>
            <person name="Farman M.L."/>
            <person name="Mitchell T.K."/>
            <person name="Orbach M.J."/>
            <person name="Thon M.R."/>
            <person name="Kulkarni R."/>
            <person name="Xu J.-R."/>
            <person name="Pan H."/>
            <person name="Read N.D."/>
            <person name="Lee Y.-H."/>
            <person name="Carbone I."/>
            <person name="Brown D."/>
            <person name="Oh Y.Y."/>
            <person name="Donofrio N."/>
            <person name="Jeong J.S."/>
            <person name="Soanes D.M."/>
            <person name="Djonovic S."/>
            <person name="Kolomiets E."/>
            <person name="Rehmeyer C."/>
            <person name="Li W."/>
            <person name="Harding M."/>
            <person name="Kim S."/>
            <person name="Lebrun M.-H."/>
            <person name="Bohnert H."/>
            <person name="Coughlan S."/>
            <person name="Butler J."/>
            <person name="Calvo S.E."/>
            <person name="Ma L.-J."/>
            <person name="Nicol R."/>
            <person name="Purcell S."/>
            <person name="Nusbaum C."/>
            <person name="Galagan J.E."/>
            <person name="Birren B.W."/>
        </authorList>
    </citation>
    <scope>NUCLEOTIDE SEQUENCE [LARGE SCALE GENOMIC DNA]</scope>
    <source>
        <strain>70-15 / ATCC MYA-4617 / FGSC 8958</strain>
    </source>
</reference>
<reference key="2">
    <citation type="journal article" date="2017" name="Microbiology">
        <title>Unravelling the biosynthesis of pyriculol in the rice blast fungus Magnaporthe oryzae.</title>
        <authorList>
            <person name="Jacob S."/>
            <person name="Groetsch T."/>
            <person name="Foster A.J."/>
            <person name="Schueffler A."/>
            <person name="Rieger P.H."/>
            <person name="Sandjo L.P."/>
            <person name="Liermann J.C."/>
            <person name="Opatz T."/>
            <person name="Thines E."/>
        </authorList>
    </citation>
    <scope>IDENTIFICATION</scope>
    <scope>INDUCTION</scope>
    <scope>FUNCTION</scope>
    <scope>PATHWAY</scope>
</reference>
<dbReference type="EC" id="1.1.1.-" evidence="6"/>
<dbReference type="EMBL" id="CM001233">
    <property type="protein sequence ID" value="EHA52504.1"/>
    <property type="molecule type" value="Genomic_DNA"/>
</dbReference>
<dbReference type="RefSeq" id="XP_003712311.1">
    <property type="nucleotide sequence ID" value="XM_003712263.1"/>
</dbReference>
<dbReference type="SMR" id="G4N292"/>
<dbReference type="FunCoup" id="G4N292">
    <property type="interactions" value="67"/>
</dbReference>
<dbReference type="STRING" id="242507.G4N292"/>
<dbReference type="EnsemblFungi" id="MGG_10910T0">
    <property type="protein sequence ID" value="MGG_10910T0"/>
    <property type="gene ID" value="MGG_10910"/>
</dbReference>
<dbReference type="GeneID" id="2677060"/>
<dbReference type="KEGG" id="mgr:MGG_10910"/>
<dbReference type="VEuPathDB" id="FungiDB:MGG_10910"/>
<dbReference type="eggNOG" id="KOG1611">
    <property type="taxonomic scope" value="Eukaryota"/>
</dbReference>
<dbReference type="HOGENOM" id="CLU_010194_9_1_1"/>
<dbReference type="InParanoid" id="G4N292"/>
<dbReference type="OMA" id="WILPAYG"/>
<dbReference type="OrthoDB" id="9876299at2759"/>
<dbReference type="Proteomes" id="UP000009058">
    <property type="component" value="Chromosome 3"/>
</dbReference>
<dbReference type="GO" id="GO:0005737">
    <property type="term" value="C:cytoplasm"/>
    <property type="evidence" value="ECO:0007669"/>
    <property type="project" value="TreeGrafter"/>
</dbReference>
<dbReference type="GO" id="GO:0016491">
    <property type="term" value="F:oxidoreductase activity"/>
    <property type="evidence" value="ECO:0007669"/>
    <property type="project" value="UniProtKB-KW"/>
</dbReference>
<dbReference type="Gene3D" id="3.40.50.720">
    <property type="entry name" value="NAD(P)-binding Rossmann-like Domain"/>
    <property type="match status" value="1"/>
</dbReference>
<dbReference type="InterPro" id="IPR051468">
    <property type="entry name" value="Fungal_SecMetab_SDRs"/>
</dbReference>
<dbReference type="InterPro" id="IPR036291">
    <property type="entry name" value="NAD(P)-bd_dom_sf"/>
</dbReference>
<dbReference type="InterPro" id="IPR002347">
    <property type="entry name" value="SDR_fam"/>
</dbReference>
<dbReference type="PANTHER" id="PTHR43544:SF7">
    <property type="entry name" value="NADB-LER2"/>
    <property type="match status" value="1"/>
</dbReference>
<dbReference type="PANTHER" id="PTHR43544">
    <property type="entry name" value="SHORT-CHAIN DEHYDROGENASE/REDUCTASE"/>
    <property type="match status" value="1"/>
</dbReference>
<dbReference type="Pfam" id="PF00106">
    <property type="entry name" value="adh_short"/>
    <property type="match status" value="1"/>
</dbReference>
<dbReference type="PRINTS" id="PR00081">
    <property type="entry name" value="GDHRDH"/>
</dbReference>
<dbReference type="SUPFAM" id="SSF51735">
    <property type="entry name" value="NAD(P)-binding Rossmann-fold domains"/>
    <property type="match status" value="1"/>
</dbReference>
<protein>
    <recommendedName>
        <fullName evidence="4">Short-chain dehydrogenase RED3</fullName>
        <ecNumber evidence="6">1.1.1.-</ecNumber>
    </recommendedName>
    <alternativeName>
        <fullName evidence="4">Pyriculol/pyriculariol biosynthesis cluster protein RED3</fullName>
    </alternativeName>
</protein>
<accession>G4N292</accession>
<proteinExistence type="evidence at transcript level"/>
<comment type="function">
    <text evidence="3 6">Short-chain dehydrogenase; part of the gene cluster that mediates the biosynthesis of pyriculol and pyriculariol, two heptaketides that induce lesion formation upon application on rice leaves but are dispensable for pathogenicity (PubMed:27902426). The highly reducing polyketide synthase synthesizes the heptaketide backbone of pyriculol and pyriculariol (PubMed:27902426). Pyriculol and pyriculariol contain several hydroxyl moieties and double bonds, so it can be assumed that several reduction steps occur during biosynthesis. These reactions could be executed by PKS19 itself or partly by the tailoring enzymes OXR1, OXR2, RED1, RED2 or RED3, identified within the cluster (Probable). The FAD-linked oxidoreductase OXR1 is the only tailoring enzyme for which the function has been determined yet, and is involved in the oxidation of dihydropyriculol and dihydropyriculariol into pyriculol and pyriculariol, respectively (PubMed:27902426).</text>
</comment>
<comment type="pathway">
    <text evidence="6">Polyketide biosynthesis.</text>
</comment>
<comment type="induction">
    <text evidence="3">Expression is increased in rice-extract medium (REM) and is correlated with the production of pyriculol.</text>
</comment>
<comment type="similarity">
    <text evidence="5">Belongs to the short-chain dehydrogenases/reductases (SDR) family.</text>
</comment>